<comment type="subcellular location">
    <subcellularLocation>
        <location evidence="1">Secreted</location>
        <location evidence="1">Cell wall</location>
    </subcellularLocation>
</comment>
<protein>
    <recommendedName>
        <fullName>31 kDa cell wall protein</fullName>
    </recommendedName>
</protein>
<accession>P80852</accession>
<evidence type="ECO:0000269" key="1">
    <source>
    </source>
</evidence>
<evidence type="ECO:0000303" key="2">
    <source>
    </source>
</evidence>
<evidence type="ECO:0000305" key="3"/>
<proteinExistence type="evidence at protein level"/>
<name>CWP32_ARATH</name>
<sequence length="14" mass="1727">SDRELHRSKAAYFF</sequence>
<dbReference type="GO" id="GO:0005576">
    <property type="term" value="C:extracellular region"/>
    <property type="evidence" value="ECO:0007669"/>
    <property type="project" value="UniProtKB-KW"/>
</dbReference>
<keyword id="KW-0134">Cell wall</keyword>
<keyword id="KW-0903">Direct protein sequencing</keyword>
<keyword id="KW-0964">Secreted</keyword>
<feature type="chain" id="PRO_0000079721" description="31 kDa cell wall protein">
    <location>
        <begin position="1"/>
        <end position="14" status="greater than"/>
    </location>
</feature>
<feature type="non-terminal residue" evidence="2">
    <location>
        <position position="14"/>
    </location>
</feature>
<organism>
    <name type="scientific">Arabidopsis thaliana</name>
    <name type="common">Mouse-ear cress</name>
    <dbReference type="NCBI Taxonomy" id="3702"/>
    <lineage>
        <taxon>Eukaryota</taxon>
        <taxon>Viridiplantae</taxon>
        <taxon>Streptophyta</taxon>
        <taxon>Embryophyta</taxon>
        <taxon>Tracheophyta</taxon>
        <taxon>Spermatophyta</taxon>
        <taxon>Magnoliopsida</taxon>
        <taxon>eudicotyledons</taxon>
        <taxon>Gunneridae</taxon>
        <taxon>Pentapetalae</taxon>
        <taxon>rosids</taxon>
        <taxon>malvids</taxon>
        <taxon>Brassicales</taxon>
        <taxon>Brassicaceae</taxon>
        <taxon>Camelineae</taxon>
        <taxon>Arabidopsis</taxon>
    </lineage>
</organism>
<reference evidence="3" key="1">
    <citation type="journal article" date="1997" name="J. Biol. Chem.">
        <title>Differential extraction and protein sequencing reveals major differences in patterns of primary cell wall proteins from plants.</title>
        <authorList>
            <person name="Robertson D."/>
            <person name="Mitchell G.P."/>
            <person name="Gilroy J.S."/>
            <person name="Gerrish C."/>
            <person name="Bolwell G.P."/>
            <person name="Slabas A.R."/>
        </authorList>
    </citation>
    <scope>PROTEIN SEQUENCE</scope>
    <scope>SUBCELLULAR LOCATION</scope>
    <source>
        <strain>cv. Landsberg erecta</strain>
    </source>
</reference>